<dbReference type="EMBL" id="CP000097">
    <property type="protein sequence ID" value="ABB25642.1"/>
    <property type="status" value="ALT_INIT"/>
    <property type="molecule type" value="Genomic_DNA"/>
</dbReference>
<dbReference type="RefSeq" id="WP_011359486.1">
    <property type="nucleotide sequence ID" value="NC_007513.1"/>
</dbReference>
<dbReference type="SMR" id="Q3AZ35"/>
<dbReference type="STRING" id="316279.Syncc9902_0674"/>
<dbReference type="KEGG" id="sye:Syncc9902_0674"/>
<dbReference type="eggNOG" id="ENOG502ZN58">
    <property type="taxonomic scope" value="Bacteria"/>
</dbReference>
<dbReference type="HOGENOM" id="CLU_216743_1_0_3"/>
<dbReference type="OrthoDB" id="541882at2"/>
<dbReference type="Proteomes" id="UP000002712">
    <property type="component" value="Chromosome"/>
</dbReference>
<dbReference type="GO" id="GO:0009512">
    <property type="term" value="C:cytochrome b6f complex"/>
    <property type="evidence" value="ECO:0007669"/>
    <property type="project" value="InterPro"/>
</dbReference>
<dbReference type="GO" id="GO:0031676">
    <property type="term" value="C:plasma membrane-derived thylakoid membrane"/>
    <property type="evidence" value="ECO:0007669"/>
    <property type="project" value="UniProtKB-SubCell"/>
</dbReference>
<dbReference type="GO" id="GO:0009055">
    <property type="term" value="F:electron transfer activity"/>
    <property type="evidence" value="ECO:0007669"/>
    <property type="project" value="UniProtKB-UniRule"/>
</dbReference>
<dbReference type="GO" id="GO:0015979">
    <property type="term" value="P:photosynthesis"/>
    <property type="evidence" value="ECO:0007669"/>
    <property type="project" value="UniProtKB-KW"/>
</dbReference>
<dbReference type="HAMAP" id="MF_00396">
    <property type="entry name" value="Cytb6_f_PetM"/>
    <property type="match status" value="1"/>
</dbReference>
<dbReference type="InterPro" id="IPR012595">
    <property type="entry name" value="PetM_cyt_b6/f_cplx_su7"/>
</dbReference>
<dbReference type="NCBIfam" id="NF008826">
    <property type="entry name" value="PRK11876.1-2"/>
    <property type="match status" value="1"/>
</dbReference>
<dbReference type="Pfam" id="PF08041">
    <property type="entry name" value="PetM"/>
    <property type="match status" value="1"/>
</dbReference>
<evidence type="ECO:0000255" key="1">
    <source>
        <dbReference type="HAMAP-Rule" id="MF_00396"/>
    </source>
</evidence>
<evidence type="ECO:0000305" key="2"/>
<gene>
    <name evidence="1" type="primary">petM</name>
    <name type="ordered locus">Syncc9902_0674</name>
</gene>
<accession>Q3AZ35</accession>
<sequence>MASEIFGTAAIFWVLIPIGLVGGALLLKLEGD</sequence>
<comment type="function">
    <text evidence="1">Component of the cytochrome b6-f complex, which mediates electron transfer between photosystem II (PSII) and photosystem I (PSI), cyclic electron flow around PSI, and state transitions.</text>
</comment>
<comment type="subunit">
    <text evidence="1">The 4 large subunits of the cytochrome b6-f complex are cytochrome b6, subunit IV (17 kDa polypeptide, PetD), cytochrome f and the Rieske protein, while the 4 small subunits are PetG, PetL, PetM and PetN. The complex functions as a dimer.</text>
</comment>
<comment type="subcellular location">
    <subcellularLocation>
        <location evidence="1">Cellular thylakoid membrane</location>
        <topology evidence="1">Single-pass membrane protein</topology>
    </subcellularLocation>
</comment>
<comment type="similarity">
    <text evidence="1">Belongs to the PetM family.</text>
</comment>
<comment type="sequence caution" evidence="2">
    <conflict type="erroneous initiation">
        <sequence resource="EMBL-CDS" id="ABB25642"/>
    </conflict>
</comment>
<feature type="chain" id="PRO_0000233235" description="Cytochrome b6-f complex subunit 7">
    <location>
        <begin position="1"/>
        <end position="32"/>
    </location>
</feature>
<feature type="transmembrane region" description="Helical" evidence="1">
    <location>
        <begin position="5"/>
        <end position="25"/>
    </location>
</feature>
<organism>
    <name type="scientific">Synechococcus sp. (strain CC9902)</name>
    <dbReference type="NCBI Taxonomy" id="316279"/>
    <lineage>
        <taxon>Bacteria</taxon>
        <taxon>Bacillati</taxon>
        <taxon>Cyanobacteriota</taxon>
        <taxon>Cyanophyceae</taxon>
        <taxon>Synechococcales</taxon>
        <taxon>Synechococcaceae</taxon>
        <taxon>Synechococcus</taxon>
    </lineage>
</organism>
<keyword id="KW-0249">Electron transport</keyword>
<keyword id="KW-0472">Membrane</keyword>
<keyword id="KW-0602">Photosynthesis</keyword>
<keyword id="KW-1185">Reference proteome</keyword>
<keyword id="KW-0793">Thylakoid</keyword>
<keyword id="KW-0812">Transmembrane</keyword>
<keyword id="KW-1133">Transmembrane helix</keyword>
<keyword id="KW-0813">Transport</keyword>
<protein>
    <recommendedName>
        <fullName evidence="1">Cytochrome b6-f complex subunit 7</fullName>
    </recommendedName>
    <alternativeName>
        <fullName evidence="1">Cytochrome b6-f complex subunit PetM</fullName>
    </alternativeName>
    <alternativeName>
        <fullName evidence="1">Cytochrome b6-f complex subunit VII</fullName>
    </alternativeName>
</protein>
<proteinExistence type="inferred from homology"/>
<reference key="1">
    <citation type="submission" date="2005-08" db="EMBL/GenBank/DDBJ databases">
        <title>Complete sequence of Synechococcus sp. CC9902.</title>
        <authorList>
            <person name="Copeland A."/>
            <person name="Lucas S."/>
            <person name="Lapidus A."/>
            <person name="Barry K."/>
            <person name="Detter J.C."/>
            <person name="Glavina T."/>
            <person name="Hammon N."/>
            <person name="Israni S."/>
            <person name="Pitluck S."/>
            <person name="Martinez M."/>
            <person name="Schmutz J."/>
            <person name="Larimer F."/>
            <person name="Land M."/>
            <person name="Kyrpides N."/>
            <person name="Ivanova N."/>
            <person name="Richardson P."/>
        </authorList>
    </citation>
    <scope>NUCLEOTIDE SEQUENCE [LARGE SCALE GENOMIC DNA]</scope>
    <source>
        <strain>CC9902</strain>
    </source>
</reference>
<name>PETM_SYNS9</name>